<accession>B5YT69</accession>
<evidence type="ECO:0000255" key="1">
    <source>
        <dbReference type="HAMAP-Rule" id="MF_01229"/>
    </source>
</evidence>
<name>SSUD_ECO5E</name>
<comment type="function">
    <text evidence="1">Catalyzes the desulfonation of aliphatic sulfonates.</text>
</comment>
<comment type="catalytic activity">
    <reaction evidence="1">
        <text>an alkanesulfonate + FMNH2 + O2 = an aldehyde + FMN + sulfite + H2O + 2 H(+)</text>
        <dbReference type="Rhea" id="RHEA:23064"/>
        <dbReference type="ChEBI" id="CHEBI:15377"/>
        <dbReference type="ChEBI" id="CHEBI:15378"/>
        <dbReference type="ChEBI" id="CHEBI:15379"/>
        <dbReference type="ChEBI" id="CHEBI:17359"/>
        <dbReference type="ChEBI" id="CHEBI:17478"/>
        <dbReference type="ChEBI" id="CHEBI:57618"/>
        <dbReference type="ChEBI" id="CHEBI:58210"/>
        <dbReference type="ChEBI" id="CHEBI:134249"/>
        <dbReference type="EC" id="1.14.14.5"/>
    </reaction>
</comment>
<comment type="subunit">
    <text evidence="1">Homotetramer.</text>
</comment>
<comment type="miscellaneous">
    <text evidence="1">FMNH(2) which is absolutely required for this enzymatic reaction, is provided by SsuE.</text>
</comment>
<comment type="similarity">
    <text evidence="1">Belongs to the SsuD family.</text>
</comment>
<proteinExistence type="inferred from homology"/>
<organism>
    <name type="scientific">Escherichia coli O157:H7 (strain EC4115 / EHEC)</name>
    <dbReference type="NCBI Taxonomy" id="444450"/>
    <lineage>
        <taxon>Bacteria</taxon>
        <taxon>Pseudomonadati</taxon>
        <taxon>Pseudomonadota</taxon>
        <taxon>Gammaproteobacteria</taxon>
        <taxon>Enterobacterales</taxon>
        <taxon>Enterobacteriaceae</taxon>
        <taxon>Escherichia</taxon>
    </lineage>
</organism>
<gene>
    <name evidence="1" type="primary">ssuD</name>
    <name type="ordered locus">ECH74115_1097</name>
</gene>
<dbReference type="EC" id="1.14.14.5" evidence="1"/>
<dbReference type="EMBL" id="CP001164">
    <property type="protein sequence ID" value="ACI37460.1"/>
    <property type="molecule type" value="Genomic_DNA"/>
</dbReference>
<dbReference type="RefSeq" id="WP_000055981.1">
    <property type="nucleotide sequence ID" value="NC_011353.1"/>
</dbReference>
<dbReference type="SMR" id="B5YT69"/>
<dbReference type="KEGG" id="ecf:ECH74115_1097"/>
<dbReference type="HOGENOM" id="CLU_027853_1_0_6"/>
<dbReference type="GO" id="GO:0008726">
    <property type="term" value="F:alkanesulfonate monooxygenase activity"/>
    <property type="evidence" value="ECO:0007669"/>
    <property type="project" value="UniProtKB-UniRule"/>
</dbReference>
<dbReference type="GO" id="GO:0046306">
    <property type="term" value="P:alkanesulfonate catabolic process"/>
    <property type="evidence" value="ECO:0007669"/>
    <property type="project" value="TreeGrafter"/>
</dbReference>
<dbReference type="CDD" id="cd01094">
    <property type="entry name" value="Alkanesulfonate_monoxygenase"/>
    <property type="match status" value="1"/>
</dbReference>
<dbReference type="FunFam" id="3.20.20.30:FF:000001">
    <property type="entry name" value="Alkanesulfonate monooxygenase"/>
    <property type="match status" value="1"/>
</dbReference>
<dbReference type="Gene3D" id="3.20.20.30">
    <property type="entry name" value="Luciferase-like domain"/>
    <property type="match status" value="1"/>
</dbReference>
<dbReference type="HAMAP" id="MF_01229">
    <property type="entry name" value="Alkanesulf_monooxygen"/>
    <property type="match status" value="1"/>
</dbReference>
<dbReference type="InterPro" id="IPR019911">
    <property type="entry name" value="Alkanesulphonate_mOase_FMN-dep"/>
</dbReference>
<dbReference type="InterPro" id="IPR011251">
    <property type="entry name" value="Luciferase-like_dom"/>
</dbReference>
<dbReference type="InterPro" id="IPR036661">
    <property type="entry name" value="Luciferase-like_sf"/>
</dbReference>
<dbReference type="InterPro" id="IPR050172">
    <property type="entry name" value="SsuD_RutA_monooxygenase"/>
</dbReference>
<dbReference type="NCBIfam" id="TIGR03565">
    <property type="entry name" value="alk_sulf_monoox"/>
    <property type="match status" value="1"/>
</dbReference>
<dbReference type="NCBIfam" id="NF001939">
    <property type="entry name" value="PRK00719.1"/>
    <property type="match status" value="1"/>
</dbReference>
<dbReference type="PANTHER" id="PTHR42847">
    <property type="entry name" value="ALKANESULFONATE MONOOXYGENASE"/>
    <property type="match status" value="1"/>
</dbReference>
<dbReference type="PANTHER" id="PTHR42847:SF4">
    <property type="entry name" value="ALKANESULFONATE MONOOXYGENASE-RELATED"/>
    <property type="match status" value="1"/>
</dbReference>
<dbReference type="Pfam" id="PF00296">
    <property type="entry name" value="Bac_luciferase"/>
    <property type="match status" value="1"/>
</dbReference>
<dbReference type="SUPFAM" id="SSF51679">
    <property type="entry name" value="Bacterial luciferase-like"/>
    <property type="match status" value="1"/>
</dbReference>
<keyword id="KW-0285">Flavoprotein</keyword>
<keyword id="KW-0288">FMN</keyword>
<keyword id="KW-0503">Monooxygenase</keyword>
<keyword id="KW-0560">Oxidoreductase</keyword>
<reference key="1">
    <citation type="journal article" date="2011" name="Proc. Natl. Acad. Sci. U.S.A.">
        <title>Genomic anatomy of Escherichia coli O157:H7 outbreaks.</title>
        <authorList>
            <person name="Eppinger M."/>
            <person name="Mammel M.K."/>
            <person name="Leclerc J.E."/>
            <person name="Ravel J."/>
            <person name="Cebula T.A."/>
        </authorList>
    </citation>
    <scope>NUCLEOTIDE SEQUENCE [LARGE SCALE GENOMIC DNA]</scope>
    <source>
        <strain>EC4115 / EHEC</strain>
    </source>
</reference>
<protein>
    <recommendedName>
        <fullName evidence="1">Alkanesulfonate monooxygenase</fullName>
        <ecNumber evidence="1">1.14.14.5</ecNumber>
    </recommendedName>
    <alternativeName>
        <fullName evidence="1">FMNH2-dependent aliphatic sulfonate monooxygenase</fullName>
    </alternativeName>
</protein>
<feature type="chain" id="PRO_1000139617" description="Alkanesulfonate monooxygenase">
    <location>
        <begin position="1"/>
        <end position="381"/>
    </location>
</feature>
<sequence>MSLNMFWFLPTHGDGHYLGTEEGSRPVDHGYLQQIAQAADRLGYTGVLIPTGRSCEDAWLVAASMIPVTQRLKFLVALRPSVTSPTVAARQAATLDRLSNGRALFNLVTGSDPQELAGDGVFLDHSERYEASAEFTQVWRRLLLGETVDFNGKHIHVRGAKLLFPPIQQPYPPLYFGGSSDVAQELAAEQVDLYLTWGEPPELVKEKIEQVRAKAAAHGRKIRFGIRLHVIVRETNDEAWQAAERLISHLDDETIAKAQAAFARTDSVGQQRMAALHNGKRDNLEISPNLWAGVGLVRGGAGTALVGDGPTVAARINEYAALGIDSFVLSGYPHLEEAYRVGELLFPHLDVAIPEIPQPQPLNPQGEAVENDFIPRRVAQS</sequence>